<evidence type="ECO:0000255" key="1"/>
<evidence type="ECO:0000255" key="2">
    <source>
        <dbReference type="PROSITE-ProRule" id="PRU00190"/>
    </source>
</evidence>
<evidence type="ECO:0000255" key="3">
    <source>
        <dbReference type="PROSITE-ProRule" id="PRU00916"/>
    </source>
</evidence>
<evidence type="ECO:0000269" key="4">
    <source>
    </source>
</evidence>
<evidence type="ECO:0000269" key="5">
    <source>
    </source>
</evidence>
<evidence type="ECO:0000269" key="6">
    <source>
    </source>
</evidence>
<evidence type="ECO:0000269" key="7">
    <source>
    </source>
</evidence>
<evidence type="ECO:0007829" key="8">
    <source>
        <dbReference type="PDB" id="1P0Y"/>
    </source>
</evidence>
<evidence type="ECO:0007829" key="9">
    <source>
        <dbReference type="PDB" id="2H21"/>
    </source>
</evidence>
<evidence type="ECO:0007829" key="10">
    <source>
        <dbReference type="PDB" id="2H23"/>
    </source>
</evidence>
<evidence type="ECO:0007829" key="11">
    <source>
        <dbReference type="PDB" id="2H2E"/>
    </source>
</evidence>
<evidence type="ECO:0007829" key="12">
    <source>
        <dbReference type="PDB" id="2H2J"/>
    </source>
</evidence>
<accession>Q43088</accession>
<dbReference type="EC" id="2.1.1.127"/>
<dbReference type="EC" id="2.1.1.259"/>
<dbReference type="EMBL" id="L34291">
    <property type="protein sequence ID" value="AAA69903.1"/>
    <property type="molecule type" value="mRNA"/>
</dbReference>
<dbReference type="PIR" id="S53005">
    <property type="entry name" value="S53005"/>
</dbReference>
<dbReference type="PDB" id="1MLV">
    <property type="method" value="X-ray"/>
    <property type="resolution" value="2.60 A"/>
    <property type="chains" value="A/B/C=46-482"/>
</dbReference>
<dbReference type="PDB" id="1OZV">
    <property type="method" value="X-ray"/>
    <property type="resolution" value="2.65 A"/>
    <property type="chains" value="A/B/C=46-482"/>
</dbReference>
<dbReference type="PDB" id="1P0Y">
    <property type="method" value="X-ray"/>
    <property type="resolution" value="2.55 A"/>
    <property type="chains" value="A/B/C=46-482"/>
</dbReference>
<dbReference type="PDB" id="2H21">
    <property type="method" value="X-ray"/>
    <property type="resolution" value="2.45 A"/>
    <property type="chains" value="A/B/C=49-482"/>
</dbReference>
<dbReference type="PDB" id="2H23">
    <property type="method" value="X-ray"/>
    <property type="resolution" value="2.45 A"/>
    <property type="chains" value="A/B/C=49-482"/>
</dbReference>
<dbReference type="PDB" id="2H2E">
    <property type="method" value="X-ray"/>
    <property type="resolution" value="2.60 A"/>
    <property type="chains" value="A/B/C=49-482"/>
</dbReference>
<dbReference type="PDB" id="2H2J">
    <property type="method" value="X-ray"/>
    <property type="resolution" value="2.45 A"/>
    <property type="chains" value="A/B/C=49-482"/>
</dbReference>
<dbReference type="PDBsum" id="1MLV"/>
<dbReference type="PDBsum" id="1OZV"/>
<dbReference type="PDBsum" id="1P0Y"/>
<dbReference type="PDBsum" id="2H21"/>
<dbReference type="PDBsum" id="2H23"/>
<dbReference type="PDBsum" id="2H2E"/>
<dbReference type="PDBsum" id="2H2J"/>
<dbReference type="SMR" id="Q43088"/>
<dbReference type="DIP" id="DIP-48722N"/>
<dbReference type="IntAct" id="Q43088">
    <property type="interactions" value="3"/>
</dbReference>
<dbReference type="KEGG" id="ag:AAA69903"/>
<dbReference type="OrthoDB" id="441812at2759"/>
<dbReference type="BRENDA" id="2.1.1.127">
    <property type="organism ID" value="4872"/>
</dbReference>
<dbReference type="BRENDA" id="2.1.1.259">
    <property type="organism ID" value="4872"/>
</dbReference>
<dbReference type="SABIO-RK" id="Q43088"/>
<dbReference type="EvolutionaryTrace" id="Q43088"/>
<dbReference type="GO" id="GO:0009507">
    <property type="term" value="C:chloroplast"/>
    <property type="evidence" value="ECO:0007669"/>
    <property type="project" value="UniProtKB-SubCell"/>
</dbReference>
<dbReference type="GO" id="GO:0030785">
    <property type="term" value="F:[ribulose-bisphosphate carboxylase]-lysine N-methyltransferase activity"/>
    <property type="evidence" value="ECO:0007669"/>
    <property type="project" value="UniProtKB-EC"/>
</dbReference>
<dbReference type="GO" id="GO:0016279">
    <property type="term" value="F:protein-lysine N-methyltransferase activity"/>
    <property type="evidence" value="ECO:0007669"/>
    <property type="project" value="InterPro"/>
</dbReference>
<dbReference type="GO" id="GO:0032259">
    <property type="term" value="P:methylation"/>
    <property type="evidence" value="ECO:0007669"/>
    <property type="project" value="UniProtKB-KW"/>
</dbReference>
<dbReference type="CDD" id="cd19179">
    <property type="entry name" value="SET_RBCMT"/>
    <property type="match status" value="1"/>
</dbReference>
<dbReference type="FunFam" id="3.90.1410.10:FF:000005">
    <property type="entry name" value="Ribulose-1,5 bisphosphate carboxylase/oxygenase large subunit N-methyltransferase, chloroplastic"/>
    <property type="match status" value="1"/>
</dbReference>
<dbReference type="FunFam" id="3.90.1420.10:FF:000004">
    <property type="entry name" value="Ribulose-1,5 bisphosphate carboxylase/oxygenase large subunit N-methyltransferase, chloroplastic"/>
    <property type="match status" value="1"/>
</dbReference>
<dbReference type="Gene3D" id="3.90.1420.10">
    <property type="entry name" value="Rubisco LSMT, substrate-binding domain"/>
    <property type="match status" value="1"/>
</dbReference>
<dbReference type="Gene3D" id="3.90.1410.10">
    <property type="entry name" value="set domain protein methyltransferase, domain 1"/>
    <property type="match status" value="1"/>
</dbReference>
<dbReference type="InterPro" id="IPR011192">
    <property type="entry name" value="Rubisco_LSMT_MeTrfase_plant"/>
</dbReference>
<dbReference type="InterPro" id="IPR015353">
    <property type="entry name" value="Rubisco_LSMT_subst-bd"/>
</dbReference>
<dbReference type="InterPro" id="IPR036464">
    <property type="entry name" value="Rubisco_LSMT_subst-bd_sf"/>
</dbReference>
<dbReference type="InterPro" id="IPR001214">
    <property type="entry name" value="SET_dom"/>
</dbReference>
<dbReference type="InterPro" id="IPR046341">
    <property type="entry name" value="SET_dom_sf"/>
</dbReference>
<dbReference type="InterPro" id="IPR044431">
    <property type="entry name" value="SET_RBCMT"/>
</dbReference>
<dbReference type="InterPro" id="IPR050600">
    <property type="entry name" value="SETD3_SETD6_MTase"/>
</dbReference>
<dbReference type="PANTHER" id="PTHR13271:SF113">
    <property type="entry name" value="[FRUCTOSE-BISPHOSPHATE ALDOLASE]-LYSINE N-METHYLTRANSFERASE, CHLOROPLASTIC"/>
    <property type="match status" value="1"/>
</dbReference>
<dbReference type="PANTHER" id="PTHR13271">
    <property type="entry name" value="UNCHARACTERIZED PUTATIVE METHYLTRANSFERASE"/>
    <property type="match status" value="1"/>
</dbReference>
<dbReference type="Pfam" id="PF09273">
    <property type="entry name" value="Rubis-subs-bind"/>
    <property type="match status" value="1"/>
</dbReference>
<dbReference type="PIRSF" id="PIRSF009328">
    <property type="entry name" value="RMT_SET"/>
    <property type="match status" value="1"/>
</dbReference>
<dbReference type="SMART" id="SM00317">
    <property type="entry name" value="SET"/>
    <property type="match status" value="1"/>
</dbReference>
<dbReference type="SUPFAM" id="SSF81822">
    <property type="entry name" value="RuBisCo LSMT C-terminal, substrate-binding domain"/>
    <property type="match status" value="1"/>
</dbReference>
<dbReference type="SUPFAM" id="SSF82199">
    <property type="entry name" value="SET domain"/>
    <property type="match status" value="1"/>
</dbReference>
<dbReference type="PROSITE" id="PS51583">
    <property type="entry name" value="SAM_MT127"/>
    <property type="match status" value="1"/>
</dbReference>
<dbReference type="PROSITE" id="PS50280">
    <property type="entry name" value="SET"/>
    <property type="match status" value="1"/>
</dbReference>
<gene>
    <name type="primary">RBCMT</name>
</gene>
<protein>
    <recommendedName>
        <fullName>Ribulose-1,5 bisphosphate carboxylase/oxygenase large subunit N-methyltransferase, chloroplastic</fullName>
        <ecNumber>2.1.1.127</ecNumber>
    </recommendedName>
    <alternativeName>
        <fullName>[Fructose-bisphosphate aldolase]-lysine N-methyltransferase</fullName>
        <ecNumber>2.1.1.259</ecNumber>
    </alternativeName>
    <alternativeName>
        <fullName>[Ribulose-bisphosphate carboxylase]-lysine N-methyltransferase</fullName>
        <shortName>PsLSMT</shortName>
        <shortName>RuBisCO LSMT</shortName>
        <shortName>RuBisCO methyltransferase</shortName>
        <shortName>rbcMT</shortName>
    </alternativeName>
</protein>
<comment type="function">
    <text evidence="7">Methylates 'Lys-14' of the large subunit of RuBisCO. Can also use with lower efficiency chloroplastic fructose-bisphosphate aldolases and gamma-tocopherol methyltransferase as substrates, but not a cytosolic aldolase.</text>
</comment>
<comment type="catalytic activity">
    <reaction>
        <text>L-lysyl-[ribulose-1,5-bisphosphate carboxylase] + 3 S-adenosyl-L-methionine = N(6),N(6),N(6)-trimethyl-L-lysyl-[ribulose-1,5-bisphosphate carboxylase] + 3 S-adenosyl-L-homocysteine + 3 H(+)</text>
        <dbReference type="Rhea" id="RHEA:50996"/>
        <dbReference type="Rhea" id="RHEA-COMP:12858"/>
        <dbReference type="Rhea" id="RHEA-COMP:12859"/>
        <dbReference type="ChEBI" id="CHEBI:15378"/>
        <dbReference type="ChEBI" id="CHEBI:29969"/>
        <dbReference type="ChEBI" id="CHEBI:57856"/>
        <dbReference type="ChEBI" id="CHEBI:59789"/>
        <dbReference type="ChEBI" id="CHEBI:61961"/>
        <dbReference type="EC" id="2.1.1.127"/>
    </reaction>
</comment>
<comment type="catalytic activity">
    <reaction>
        <text>[fructose-bisphosphate aldolase]-L-lysine + 3 S-adenosyl-L-methionine = [fructose-bisphosphate aldolase]-N(6),N(6),N(6)-trimethyl-L-lysine + 3 S-adenosyl-L-homocysteine + 3 H(+)</text>
        <dbReference type="Rhea" id="RHEA:51000"/>
        <dbReference type="Rhea" id="RHEA-COMP:12861"/>
        <dbReference type="Rhea" id="RHEA-COMP:12862"/>
        <dbReference type="ChEBI" id="CHEBI:15378"/>
        <dbReference type="ChEBI" id="CHEBI:29969"/>
        <dbReference type="ChEBI" id="CHEBI:57856"/>
        <dbReference type="ChEBI" id="CHEBI:59789"/>
        <dbReference type="ChEBI" id="CHEBI:61961"/>
        <dbReference type="EC" id="2.1.1.259"/>
    </reaction>
</comment>
<comment type="biophysicochemical properties">
    <kinetics>
        <KM evidence="4 7">12.9 uM for fructose-bisphosphate aldolase 2</KM>
        <KM evidence="4 7">14 uM for fructose-bisphosphate aldolase 3</KM>
        <KM evidence="4 7">32 uM for gamma-tocopherol methyltransferase</KM>
        <KM evidence="4 7">4.5 uM for rubisco</KM>
        <KM evidence="4 7">6 uM for S-adenosyl-L-methionine</KM>
        <Vmax evidence="4 7">19.5 nmol/min/mg enzyme with fructose-bisphosphate aldolase 2 as substrate</Vmax>
        <Vmax evidence="4 7">9.0 nmol/min/mg enzyme with fructose-bisphosphate aldolase 3 as substrate</Vmax>
        <Vmax evidence="4 7">1.7 nmol/min/mg enzyme with gamma-tocopherol methyltransferase as substrate</Vmax>
        <Vmax evidence="4 7">44.6 nmol/min/mg enzyme with rubisco as substrate</Vmax>
        <Vmax evidence="4 7">56.0 nmol/min/mg enzyme with S-adenosyl-L-methionine as substrate</Vmax>
        <text>kcat is 0.047 sec(-1) for S-adenosyl-L-methionine. kcat is 0.038 sec(-1) for rubisco.</text>
    </kinetics>
</comment>
<comment type="subunit">
    <text evidence="4 5 6">Homotrimer.</text>
</comment>
<comment type="subcellular location">
    <subcellularLocation>
        <location>Plastid</location>
        <location>Chloroplast</location>
    </subcellularLocation>
</comment>
<comment type="tissue specificity">
    <text>Highly expressed in leaf.</text>
</comment>
<comment type="similarity">
    <text evidence="3">Belongs to the class V-like SAM-binding methyltransferase superfamily. Plant protein-lysine LSMT methyltransferase family.</text>
</comment>
<keyword id="KW-0002">3D-structure</keyword>
<keyword id="KW-0150">Chloroplast</keyword>
<keyword id="KW-0903">Direct protein sequencing</keyword>
<keyword id="KW-0489">Methyltransferase</keyword>
<keyword id="KW-0934">Plastid</keyword>
<keyword id="KW-0949">S-adenosyl-L-methionine</keyword>
<keyword id="KW-0808">Transferase</keyword>
<keyword id="KW-0809">Transit peptide</keyword>
<proteinExistence type="evidence at protein level"/>
<sequence>MATIFSGGSVSPFLFHTNKGTSFTPKAPILHLKRSFSAKSVASVGTEPSLSPAVQTFWKWLQEEGVITAKTPVKASVVTEGLGLVALKDISRNDVILQVPKRLWINPDAVAASEIGRVCSELKPWLSVILFLIRERSREDSVWKHYFGILPQETDSTIYWSEEELQELQGSQLLKTTVSVKEYVKNECLKLEQEIILPNKRLFPDPVTLDDFFWAFGILRSRAFSRLRNENLVVVPMADLINHSAGVTTEDHAYEVKGAAGLFSWDYLFSLKSPLSVKAGEQVYIQYDLNKSNAELALDYGFIEPNENRHAYTLTLEISESDPFFDDKLDVAESNGFAQTAYFDIFYNRTLPPGLLPYLRLVALGGTDAFLLESLFRDTIWGHLELSVSRDNEELLCKAVREACKSALAGYHTTIEQDRELKEGNLDSRLAIAVGIREGEKMVLQQIDGIFEQKELELDQLEYYQERRLKDLGLCGENGDILGDLGKFF</sequence>
<organism>
    <name type="scientific">Pisum sativum</name>
    <name type="common">Garden pea</name>
    <name type="synonym">Lathyrus oleraceus</name>
    <dbReference type="NCBI Taxonomy" id="3888"/>
    <lineage>
        <taxon>Eukaryota</taxon>
        <taxon>Viridiplantae</taxon>
        <taxon>Streptophyta</taxon>
        <taxon>Embryophyta</taxon>
        <taxon>Tracheophyta</taxon>
        <taxon>Spermatophyta</taxon>
        <taxon>Magnoliopsida</taxon>
        <taxon>eudicotyledons</taxon>
        <taxon>Gunneridae</taxon>
        <taxon>Pentapetalae</taxon>
        <taxon>rosids</taxon>
        <taxon>fabids</taxon>
        <taxon>Fabales</taxon>
        <taxon>Fabaceae</taxon>
        <taxon>Papilionoideae</taxon>
        <taxon>50 kb inversion clade</taxon>
        <taxon>NPAAA clade</taxon>
        <taxon>Hologalegina</taxon>
        <taxon>IRL clade</taxon>
        <taxon>Fabeae</taxon>
        <taxon>Pisum</taxon>
    </lineage>
</organism>
<reference key="1">
    <citation type="journal article" date="1995" name="Plant Mol. Biol.">
        <title>Cloning and developmental expression of pea ribulose-1,5-bisphosphate carboxylase/oxygenase large subunit N-methyltransferase.</title>
        <authorList>
            <person name="Klein R.R."/>
            <person name="Houtz R.L."/>
        </authorList>
    </citation>
    <scope>NUCLEOTIDE SEQUENCE [MRNA]</scope>
    <scope>PARTIAL PROTEIN SEQUENCE</scope>
    <source>
        <tissue>Leaf</tissue>
    </source>
</reference>
<reference key="2">
    <citation type="journal article" date="2002" name="Cell">
        <title>Structure and catalytic mechanism of a SET domain protein methyltransferase.</title>
        <authorList>
            <person name="Trievel R.C."/>
            <person name="Beach B.M."/>
            <person name="Dirk L.M."/>
            <person name="Houtz R.L."/>
            <person name="Hurley J.H."/>
        </authorList>
    </citation>
    <scope>X-RAY CRYSTALLOGRAPHY (2.60 ANGSTROMS) OF 46-482 IN COMPLEX WITH S-ADENOSYL-L-METHIONINE</scope>
    <scope>CATALYTIC ACTIVITY</scope>
    <scope>SUBUNIT</scope>
    <scope>MUTAGENESIS OF GLU-281</scope>
    <scope>BIOPHYSICOCHEMICAL PROPERTIES</scope>
</reference>
<reference key="3">
    <citation type="journal article" date="2003" name="Nat. Struct. Biol.">
        <title>Mechanism of multiple lysine methylation by the SET domain enzyme Rubisco LSMT.</title>
        <authorList>
            <person name="Trievel R.C."/>
            <person name="Flynn E.M."/>
            <person name="Houtz R.L."/>
            <person name="Hurley J.H."/>
        </authorList>
    </citation>
    <scope>X-RAY CRYSTALLOGRAPHY (2.55 ANGSTROMS) OF 46-482 IN COMPLEX WITH S-ADENOSYL-L-METHIONINE AND SUBSTRATE</scope>
</reference>
<reference key="4">
    <citation type="journal article" date="2006" name="J. Biol. Chem.">
        <title>Catalytic roles for carbon-oxygen hydrogen bonding in SET domain lysine methyltransferases.</title>
        <authorList>
            <person name="Couture J.F."/>
            <person name="Hauk G."/>
            <person name="Thompson M.J."/>
            <person name="Blackburn G.M."/>
            <person name="Trievel R.C."/>
        </authorList>
    </citation>
    <scope>X-RAY CRYSTALLOGRAPHY (2.45 ANGSTROMS) OF 49-482 IN COMPLEX WITH S-ADENOSYL-L-METHIONINE AND SUBSTRATE</scope>
</reference>
<reference key="5">
    <citation type="journal article" date="2012" name="J. Biol. Chem.">
        <title>Characterization of chloroplastic fructose 1,6-bisphosphate aldolases as lysine-methylated proteins in plants.</title>
        <authorList>
            <person name="Mininno M."/>
            <person name="Brugiere S."/>
            <person name="Pautre V."/>
            <person name="Gilgen A."/>
            <person name="Ma S."/>
            <person name="Ferro M."/>
            <person name="Tardif M."/>
            <person name="Alban C."/>
            <person name="Ravanel S."/>
        </authorList>
    </citation>
    <scope>FUNCTION</scope>
    <scope>CATALYTIC ACTIVITY</scope>
    <scope>BIOPHYSICOCHEMICAL PROPERTIES</scope>
</reference>
<name>RBCMT_PEA</name>
<feature type="transit peptide" description="Chloroplast" evidence="1">
    <location>
        <begin position="1"/>
        <end position="37"/>
    </location>
</feature>
<feature type="chain" id="PRO_0000022199" description="Ribulose-1,5 bisphosphate carboxylase/oxygenase large subunit N-methyltransferase, chloroplastic">
    <location>
        <begin position="38"/>
        <end position="489"/>
    </location>
</feature>
<feature type="domain" description="SET" evidence="2">
    <location>
        <begin position="64"/>
        <end position="288"/>
    </location>
</feature>
<feature type="binding site">
    <location>
        <begin position="80"/>
        <end position="82"/>
    </location>
    <ligand>
        <name>S-adenosyl-L-methionine</name>
        <dbReference type="ChEBI" id="CHEBI:59789"/>
    </ligand>
</feature>
<feature type="binding site" evidence="2 4 5 6">
    <location>
        <position position="222"/>
    </location>
    <ligand>
        <name>S-adenosyl-L-methionine</name>
        <dbReference type="ChEBI" id="CHEBI:59789"/>
    </ligand>
</feature>
<feature type="binding site" evidence="5 6">
    <location>
        <position position="222"/>
    </location>
    <ligand>
        <name>substrate</name>
    </ligand>
</feature>
<feature type="binding site" evidence="5 6">
    <location>
        <position position="226"/>
    </location>
    <ligand>
        <name>substrate</name>
    </ligand>
</feature>
<feature type="binding site" evidence="5 6">
    <location>
        <position position="239"/>
    </location>
    <ligand>
        <name>substrate</name>
    </ligand>
</feature>
<feature type="binding site">
    <location>
        <begin position="242"/>
        <end position="243"/>
    </location>
    <ligand>
        <name>S-adenosyl-L-methionine</name>
        <dbReference type="ChEBI" id="CHEBI:59789"/>
    </ligand>
</feature>
<feature type="binding site" evidence="5 6">
    <location>
        <position position="254"/>
    </location>
    <ligand>
        <name>substrate</name>
    </ligand>
</feature>
<feature type="binding site" evidence="5 6">
    <location>
        <position position="287"/>
    </location>
    <ligand>
        <name>substrate</name>
    </ligand>
</feature>
<feature type="binding site" evidence="5 6">
    <location>
        <position position="300"/>
    </location>
    <ligand>
        <name>substrate</name>
    </ligand>
</feature>
<feature type="mutagenesis site" description="No effect on substrate affinity, but reduced catalytic activity." evidence="4">
    <original>E</original>
    <variation>Q</variation>
    <location>
        <position position="281"/>
    </location>
</feature>
<feature type="helix" evidence="9">
    <location>
        <begin position="52"/>
        <end position="63"/>
    </location>
</feature>
<feature type="strand" evidence="11">
    <location>
        <begin position="66"/>
        <end position="70"/>
    </location>
</feature>
<feature type="strand" evidence="9">
    <location>
        <begin position="72"/>
        <end position="78"/>
    </location>
</feature>
<feature type="strand" evidence="9">
    <location>
        <begin position="81"/>
        <end position="88"/>
    </location>
</feature>
<feature type="strand" evidence="9">
    <location>
        <begin position="94"/>
        <end position="100"/>
    </location>
</feature>
<feature type="helix" evidence="9">
    <location>
        <begin position="101"/>
        <end position="103"/>
    </location>
</feature>
<feature type="helix" evidence="9">
    <location>
        <begin position="107"/>
        <end position="110"/>
    </location>
</feature>
<feature type="helix" evidence="9">
    <location>
        <begin position="116"/>
        <end position="119"/>
    </location>
</feature>
<feature type="strand" evidence="8">
    <location>
        <begin position="120"/>
        <end position="122"/>
    </location>
</feature>
<feature type="helix" evidence="9">
    <location>
        <begin position="124"/>
        <end position="137"/>
    </location>
</feature>
<feature type="helix" evidence="9">
    <location>
        <begin position="144"/>
        <end position="147"/>
    </location>
</feature>
<feature type="turn" evidence="9">
    <location>
        <begin position="157"/>
        <end position="159"/>
    </location>
</feature>
<feature type="helix" evidence="9">
    <location>
        <begin position="162"/>
        <end position="166"/>
    </location>
</feature>
<feature type="turn" evidence="9">
    <location>
        <begin position="167"/>
        <end position="170"/>
    </location>
</feature>
<feature type="helix" evidence="9">
    <location>
        <begin position="172"/>
        <end position="194"/>
    </location>
</feature>
<feature type="turn" evidence="9">
    <location>
        <begin position="198"/>
        <end position="202"/>
    </location>
</feature>
<feature type="helix" evidence="9">
    <location>
        <begin position="209"/>
        <end position="222"/>
    </location>
</feature>
<feature type="strand" evidence="8">
    <location>
        <begin position="226"/>
        <end position="229"/>
    </location>
</feature>
<feature type="strand" evidence="8">
    <location>
        <begin position="231"/>
        <end position="233"/>
    </location>
</feature>
<feature type="helix" evidence="12">
    <location>
        <begin position="238"/>
        <end position="240"/>
    </location>
</feature>
<feature type="strand" evidence="9">
    <location>
        <begin position="253"/>
        <end position="255"/>
    </location>
</feature>
<feature type="helix" evidence="9">
    <location>
        <begin position="258"/>
        <end position="260"/>
    </location>
</feature>
<feature type="helix" evidence="9">
    <location>
        <begin position="264"/>
        <end position="266"/>
    </location>
</feature>
<feature type="strand" evidence="9">
    <location>
        <begin position="268"/>
        <end position="275"/>
    </location>
</feature>
<feature type="strand" evidence="10">
    <location>
        <begin position="281"/>
        <end position="285"/>
    </location>
</feature>
<feature type="helix" evidence="9">
    <location>
        <begin position="293"/>
        <end position="299"/>
    </location>
</feature>
<feature type="helix" evidence="9">
    <location>
        <begin position="307"/>
        <end position="309"/>
    </location>
</feature>
<feature type="strand" evidence="9">
    <location>
        <begin position="311"/>
        <end position="317"/>
    </location>
</feature>
<feature type="helix" evidence="9">
    <location>
        <begin position="325"/>
        <end position="333"/>
    </location>
</feature>
<feature type="turn" evidence="9">
    <location>
        <begin position="334"/>
        <end position="336"/>
    </location>
</feature>
<feature type="strand" evidence="9">
    <location>
        <begin position="339"/>
        <end position="346"/>
    </location>
</feature>
<feature type="helix" evidence="9">
    <location>
        <begin position="355"/>
        <end position="363"/>
    </location>
</feature>
<feature type="helix" evidence="9">
    <location>
        <begin position="366"/>
        <end position="372"/>
    </location>
</feature>
<feature type="helix" evidence="9">
    <location>
        <begin position="374"/>
        <end position="376"/>
    </location>
</feature>
<feature type="turn" evidence="9">
    <location>
        <begin position="377"/>
        <end position="379"/>
    </location>
</feature>
<feature type="helix" evidence="9">
    <location>
        <begin position="380"/>
        <end position="386"/>
    </location>
</feature>
<feature type="helix" evidence="9">
    <location>
        <begin position="390"/>
        <end position="408"/>
    </location>
</feature>
<feature type="strand" evidence="8">
    <location>
        <begin position="411"/>
        <end position="413"/>
    </location>
</feature>
<feature type="helix" evidence="9">
    <location>
        <begin position="415"/>
        <end position="422"/>
    </location>
</feature>
<feature type="helix" evidence="9">
    <location>
        <begin position="428"/>
        <end position="456"/>
    </location>
</feature>
<feature type="turn" evidence="9">
    <location>
        <begin position="457"/>
        <end position="460"/>
    </location>
</feature>
<feature type="helix" evidence="9">
    <location>
        <begin position="464"/>
        <end position="469"/>
    </location>
</feature>
<feature type="strand" evidence="11">
    <location>
        <begin position="474"/>
        <end position="476"/>
    </location>
</feature>
<feature type="helix" evidence="9">
    <location>
        <begin position="479"/>
        <end position="482"/>
    </location>
</feature>